<proteinExistence type="inferred from homology"/>
<comment type="function">
    <text evidence="1">Catalyzes the addition of meso-diaminopimelic acid to the nucleotide precursor UDP-N-acetylmuramoyl-L-alanyl-D-glutamate (UMAG) in the biosynthesis of bacterial cell-wall peptidoglycan.</text>
</comment>
<comment type="catalytic activity">
    <reaction evidence="1">
        <text>UDP-N-acetyl-alpha-D-muramoyl-L-alanyl-D-glutamate + meso-2,6-diaminopimelate + ATP = UDP-N-acetyl-alpha-D-muramoyl-L-alanyl-gamma-D-glutamyl-meso-2,6-diaminopimelate + ADP + phosphate + H(+)</text>
        <dbReference type="Rhea" id="RHEA:23676"/>
        <dbReference type="ChEBI" id="CHEBI:15378"/>
        <dbReference type="ChEBI" id="CHEBI:30616"/>
        <dbReference type="ChEBI" id="CHEBI:43474"/>
        <dbReference type="ChEBI" id="CHEBI:57791"/>
        <dbReference type="ChEBI" id="CHEBI:83900"/>
        <dbReference type="ChEBI" id="CHEBI:83905"/>
        <dbReference type="ChEBI" id="CHEBI:456216"/>
        <dbReference type="EC" id="6.3.2.13"/>
    </reaction>
</comment>
<comment type="cofactor">
    <cofactor evidence="1">
        <name>Mg(2+)</name>
        <dbReference type="ChEBI" id="CHEBI:18420"/>
    </cofactor>
</comment>
<comment type="pathway">
    <text evidence="1">Cell wall biogenesis; peptidoglycan biosynthesis.</text>
</comment>
<comment type="subcellular location">
    <subcellularLocation>
        <location evidence="1">Cytoplasm</location>
    </subcellularLocation>
</comment>
<comment type="PTM">
    <text evidence="1">Carboxylation is probably crucial for Mg(2+) binding and, consequently, for the gamma-phosphate positioning of ATP.</text>
</comment>
<comment type="similarity">
    <text evidence="1">Belongs to the MurCDEF family. MurE subfamily.</text>
</comment>
<accession>Q9A595</accession>
<sequence>MTKRLSDLFNRPFATDPVIAGVTADSRKVTTGWLFAALPGTKVDGRDFAEGAVAKGAAAILAPEGGLEGLGVPVVRSEDARRAYALAAAAFWGKQPAMCVAVTGTNGKTSVAGFCRQIFTKLGHKAASMGTLGVVVSQPGQPDQQLTPPGLTTPDAGDVAEMIARLADMGVTHLALEASSHGVDQRRIDGVKLSAAGFTNFTQDHLDYHGSMEAYRAAKLRLFDTLTPAGAMAVLNADSEAFPDFAAAAVTSGQSVFSVGEEGQGLRLLSRTPTPAGQDLVVEAEGVVHHLKLPLAGAFQASNVLVAAGLCIAAGEDSAKVLKALETLEGAAGRLQRVGRGPKGGEAYVDYAHTPDGLQTVLEALRPHTAGKLIAVFGAGGDRDRGKRPLMGAIGAKLADIAIVTDDNPRSEDPASIRAAILEAAPGAREIGDRRAAIRAAVALMSEGDVLVVAGKGHEQGQIVAGVVHPFDDVAETLQALEGVDA</sequence>
<organism>
    <name type="scientific">Caulobacter vibrioides (strain ATCC 19089 / CIP 103742 / CB 15)</name>
    <name type="common">Caulobacter crescentus</name>
    <dbReference type="NCBI Taxonomy" id="190650"/>
    <lineage>
        <taxon>Bacteria</taxon>
        <taxon>Pseudomonadati</taxon>
        <taxon>Pseudomonadota</taxon>
        <taxon>Alphaproteobacteria</taxon>
        <taxon>Caulobacterales</taxon>
        <taxon>Caulobacteraceae</taxon>
        <taxon>Caulobacter</taxon>
    </lineage>
</organism>
<name>MURE_CAUVC</name>
<gene>
    <name evidence="1" type="primary">murE</name>
    <name type="ordered locus">CC_2559</name>
</gene>
<keyword id="KW-0067">ATP-binding</keyword>
<keyword id="KW-0131">Cell cycle</keyword>
<keyword id="KW-0132">Cell division</keyword>
<keyword id="KW-0133">Cell shape</keyword>
<keyword id="KW-0961">Cell wall biogenesis/degradation</keyword>
<keyword id="KW-0963">Cytoplasm</keyword>
<keyword id="KW-0436">Ligase</keyword>
<keyword id="KW-0460">Magnesium</keyword>
<keyword id="KW-0547">Nucleotide-binding</keyword>
<keyword id="KW-0573">Peptidoglycan synthesis</keyword>
<keyword id="KW-1185">Reference proteome</keyword>
<evidence type="ECO:0000255" key="1">
    <source>
        <dbReference type="HAMAP-Rule" id="MF_00208"/>
    </source>
</evidence>
<reference key="1">
    <citation type="journal article" date="2001" name="Proc. Natl. Acad. Sci. U.S.A.">
        <title>Complete genome sequence of Caulobacter crescentus.</title>
        <authorList>
            <person name="Nierman W.C."/>
            <person name="Feldblyum T.V."/>
            <person name="Laub M.T."/>
            <person name="Paulsen I.T."/>
            <person name="Nelson K.E."/>
            <person name="Eisen J.A."/>
            <person name="Heidelberg J.F."/>
            <person name="Alley M.R.K."/>
            <person name="Ohta N."/>
            <person name="Maddock J.R."/>
            <person name="Potocka I."/>
            <person name="Nelson W.C."/>
            <person name="Newton A."/>
            <person name="Stephens C."/>
            <person name="Phadke N.D."/>
            <person name="Ely B."/>
            <person name="DeBoy R.T."/>
            <person name="Dodson R.J."/>
            <person name="Durkin A.S."/>
            <person name="Gwinn M.L."/>
            <person name="Haft D.H."/>
            <person name="Kolonay J.F."/>
            <person name="Smit J."/>
            <person name="Craven M.B."/>
            <person name="Khouri H.M."/>
            <person name="Shetty J."/>
            <person name="Berry K.J."/>
            <person name="Utterback T.R."/>
            <person name="Tran K."/>
            <person name="Wolf A.M."/>
            <person name="Vamathevan J.J."/>
            <person name="Ermolaeva M.D."/>
            <person name="White O."/>
            <person name="Salzberg S.L."/>
            <person name="Venter J.C."/>
            <person name="Shapiro L."/>
            <person name="Fraser C.M."/>
        </authorList>
    </citation>
    <scope>NUCLEOTIDE SEQUENCE [LARGE SCALE GENOMIC DNA]</scope>
    <source>
        <strain>ATCC 19089 / CIP 103742 / CB 15</strain>
    </source>
</reference>
<dbReference type="EC" id="6.3.2.13" evidence="1"/>
<dbReference type="EMBL" id="AE005673">
    <property type="protein sequence ID" value="AAK24529.1"/>
    <property type="molecule type" value="Genomic_DNA"/>
</dbReference>
<dbReference type="PIR" id="E87566">
    <property type="entry name" value="E87566"/>
</dbReference>
<dbReference type="RefSeq" id="NP_421361.1">
    <property type="nucleotide sequence ID" value="NC_002696.2"/>
</dbReference>
<dbReference type="RefSeq" id="WP_010920415.1">
    <property type="nucleotide sequence ID" value="NC_002696.2"/>
</dbReference>
<dbReference type="SMR" id="Q9A595"/>
<dbReference type="STRING" id="190650.CC_2559"/>
<dbReference type="EnsemblBacteria" id="AAK24529">
    <property type="protein sequence ID" value="AAK24529"/>
    <property type="gene ID" value="CC_2559"/>
</dbReference>
<dbReference type="KEGG" id="ccr:CC_2559"/>
<dbReference type="PATRIC" id="fig|190650.5.peg.2573"/>
<dbReference type="eggNOG" id="COG0769">
    <property type="taxonomic scope" value="Bacteria"/>
</dbReference>
<dbReference type="HOGENOM" id="CLU_022291_3_1_5"/>
<dbReference type="BioCyc" id="CAULO:CC2559-MONOMER"/>
<dbReference type="UniPathway" id="UPA00219"/>
<dbReference type="Proteomes" id="UP000001816">
    <property type="component" value="Chromosome"/>
</dbReference>
<dbReference type="GO" id="GO:0005737">
    <property type="term" value="C:cytoplasm"/>
    <property type="evidence" value="ECO:0007669"/>
    <property type="project" value="UniProtKB-SubCell"/>
</dbReference>
<dbReference type="GO" id="GO:0005524">
    <property type="term" value="F:ATP binding"/>
    <property type="evidence" value="ECO:0007669"/>
    <property type="project" value="UniProtKB-UniRule"/>
</dbReference>
<dbReference type="GO" id="GO:0000287">
    <property type="term" value="F:magnesium ion binding"/>
    <property type="evidence" value="ECO:0007669"/>
    <property type="project" value="UniProtKB-UniRule"/>
</dbReference>
<dbReference type="GO" id="GO:0008765">
    <property type="term" value="F:UDP-N-acetylmuramoylalanyl-D-glutamate-2,6-diaminopimelate ligase activity"/>
    <property type="evidence" value="ECO:0007669"/>
    <property type="project" value="UniProtKB-UniRule"/>
</dbReference>
<dbReference type="GO" id="GO:0051301">
    <property type="term" value="P:cell division"/>
    <property type="evidence" value="ECO:0007669"/>
    <property type="project" value="UniProtKB-KW"/>
</dbReference>
<dbReference type="GO" id="GO:0071555">
    <property type="term" value="P:cell wall organization"/>
    <property type="evidence" value="ECO:0007669"/>
    <property type="project" value="UniProtKB-KW"/>
</dbReference>
<dbReference type="GO" id="GO:0009252">
    <property type="term" value="P:peptidoglycan biosynthetic process"/>
    <property type="evidence" value="ECO:0007669"/>
    <property type="project" value="UniProtKB-UniRule"/>
</dbReference>
<dbReference type="GO" id="GO:0008360">
    <property type="term" value="P:regulation of cell shape"/>
    <property type="evidence" value="ECO:0007669"/>
    <property type="project" value="UniProtKB-KW"/>
</dbReference>
<dbReference type="Gene3D" id="3.90.190.20">
    <property type="entry name" value="Mur ligase, C-terminal domain"/>
    <property type="match status" value="1"/>
</dbReference>
<dbReference type="Gene3D" id="3.40.1190.10">
    <property type="entry name" value="Mur-like, catalytic domain"/>
    <property type="match status" value="1"/>
</dbReference>
<dbReference type="Gene3D" id="3.40.1390.10">
    <property type="entry name" value="MurE/MurF, N-terminal domain"/>
    <property type="match status" value="1"/>
</dbReference>
<dbReference type="HAMAP" id="MF_00208">
    <property type="entry name" value="MurE"/>
    <property type="match status" value="1"/>
</dbReference>
<dbReference type="InterPro" id="IPR036565">
    <property type="entry name" value="Mur-like_cat_sf"/>
</dbReference>
<dbReference type="InterPro" id="IPR004101">
    <property type="entry name" value="Mur_ligase_C"/>
</dbReference>
<dbReference type="InterPro" id="IPR036615">
    <property type="entry name" value="Mur_ligase_C_dom_sf"/>
</dbReference>
<dbReference type="InterPro" id="IPR013221">
    <property type="entry name" value="Mur_ligase_cen"/>
</dbReference>
<dbReference type="InterPro" id="IPR000713">
    <property type="entry name" value="Mur_ligase_N"/>
</dbReference>
<dbReference type="InterPro" id="IPR035911">
    <property type="entry name" value="MurE/MurF_N"/>
</dbReference>
<dbReference type="InterPro" id="IPR005761">
    <property type="entry name" value="UDP-N-AcMur-Glu-dNH2Pim_ligase"/>
</dbReference>
<dbReference type="NCBIfam" id="TIGR01085">
    <property type="entry name" value="murE"/>
    <property type="match status" value="1"/>
</dbReference>
<dbReference type="NCBIfam" id="NF001124">
    <property type="entry name" value="PRK00139.1-2"/>
    <property type="match status" value="1"/>
</dbReference>
<dbReference type="NCBIfam" id="NF001126">
    <property type="entry name" value="PRK00139.1-4"/>
    <property type="match status" value="1"/>
</dbReference>
<dbReference type="PANTHER" id="PTHR23135">
    <property type="entry name" value="MUR LIGASE FAMILY MEMBER"/>
    <property type="match status" value="1"/>
</dbReference>
<dbReference type="PANTHER" id="PTHR23135:SF4">
    <property type="entry name" value="UDP-N-ACETYLMURAMOYL-L-ALANYL-D-GLUTAMATE--2,6-DIAMINOPIMELATE LIGASE MURE HOMOLOG, CHLOROPLASTIC"/>
    <property type="match status" value="1"/>
</dbReference>
<dbReference type="Pfam" id="PF01225">
    <property type="entry name" value="Mur_ligase"/>
    <property type="match status" value="1"/>
</dbReference>
<dbReference type="Pfam" id="PF02875">
    <property type="entry name" value="Mur_ligase_C"/>
    <property type="match status" value="1"/>
</dbReference>
<dbReference type="Pfam" id="PF08245">
    <property type="entry name" value="Mur_ligase_M"/>
    <property type="match status" value="1"/>
</dbReference>
<dbReference type="SUPFAM" id="SSF53623">
    <property type="entry name" value="MurD-like peptide ligases, catalytic domain"/>
    <property type="match status" value="1"/>
</dbReference>
<dbReference type="SUPFAM" id="SSF53244">
    <property type="entry name" value="MurD-like peptide ligases, peptide-binding domain"/>
    <property type="match status" value="1"/>
</dbReference>
<dbReference type="SUPFAM" id="SSF63418">
    <property type="entry name" value="MurE/MurF N-terminal domain"/>
    <property type="match status" value="1"/>
</dbReference>
<feature type="chain" id="PRO_0000101878" description="UDP-N-acetylmuramoyl-L-alanyl-D-glutamate--2,6-diaminopimelate ligase">
    <location>
        <begin position="1"/>
        <end position="486"/>
    </location>
</feature>
<feature type="short sequence motif" description="Meso-diaminopimelate recognition motif">
    <location>
        <begin position="407"/>
        <end position="410"/>
    </location>
</feature>
<feature type="binding site" evidence="1">
    <location>
        <position position="26"/>
    </location>
    <ligand>
        <name>UDP-N-acetyl-alpha-D-muramoyl-L-alanyl-D-glutamate</name>
        <dbReference type="ChEBI" id="CHEBI:83900"/>
    </ligand>
</feature>
<feature type="binding site" evidence="1">
    <location>
        <begin position="104"/>
        <end position="110"/>
    </location>
    <ligand>
        <name>ATP</name>
        <dbReference type="ChEBI" id="CHEBI:30616"/>
    </ligand>
</feature>
<feature type="binding site" evidence="1">
    <location>
        <begin position="152"/>
        <end position="153"/>
    </location>
    <ligand>
        <name>UDP-N-acetyl-alpha-D-muramoyl-L-alanyl-D-glutamate</name>
        <dbReference type="ChEBI" id="CHEBI:83900"/>
    </ligand>
</feature>
<feature type="binding site" evidence="1">
    <location>
        <position position="179"/>
    </location>
    <ligand>
        <name>UDP-N-acetyl-alpha-D-muramoyl-L-alanyl-D-glutamate</name>
        <dbReference type="ChEBI" id="CHEBI:83900"/>
    </ligand>
</feature>
<feature type="binding site" evidence="1">
    <location>
        <position position="185"/>
    </location>
    <ligand>
        <name>UDP-N-acetyl-alpha-D-muramoyl-L-alanyl-D-glutamate</name>
        <dbReference type="ChEBI" id="CHEBI:83900"/>
    </ligand>
</feature>
<feature type="binding site" evidence="1">
    <location>
        <position position="187"/>
    </location>
    <ligand>
        <name>UDP-N-acetyl-alpha-D-muramoyl-L-alanyl-D-glutamate</name>
        <dbReference type="ChEBI" id="CHEBI:83900"/>
    </ligand>
</feature>
<feature type="binding site" evidence="1">
    <location>
        <position position="383"/>
    </location>
    <ligand>
        <name>meso-2,6-diaminopimelate</name>
        <dbReference type="ChEBI" id="CHEBI:57791"/>
    </ligand>
</feature>
<feature type="binding site" evidence="1">
    <location>
        <begin position="407"/>
        <end position="410"/>
    </location>
    <ligand>
        <name>meso-2,6-diaminopimelate</name>
        <dbReference type="ChEBI" id="CHEBI:57791"/>
    </ligand>
</feature>
<feature type="binding site" evidence="1">
    <location>
        <position position="455"/>
    </location>
    <ligand>
        <name>meso-2,6-diaminopimelate</name>
        <dbReference type="ChEBI" id="CHEBI:57791"/>
    </ligand>
</feature>
<feature type="binding site" evidence="1">
    <location>
        <position position="459"/>
    </location>
    <ligand>
        <name>meso-2,6-diaminopimelate</name>
        <dbReference type="ChEBI" id="CHEBI:57791"/>
    </ligand>
</feature>
<feature type="modified residue" description="N6-carboxylysine" evidence="1">
    <location>
        <position position="219"/>
    </location>
</feature>
<protein>
    <recommendedName>
        <fullName evidence="1">UDP-N-acetylmuramoyl-L-alanyl-D-glutamate--2,6-diaminopimelate ligase</fullName>
        <ecNumber evidence="1">6.3.2.13</ecNumber>
    </recommendedName>
    <alternativeName>
        <fullName evidence="1">Meso-A2pm-adding enzyme</fullName>
    </alternativeName>
    <alternativeName>
        <fullName evidence="1">Meso-diaminopimelate-adding enzyme</fullName>
    </alternativeName>
    <alternativeName>
        <fullName evidence="1">UDP-MurNAc-L-Ala-D-Glu:meso-diaminopimelate ligase</fullName>
    </alternativeName>
    <alternativeName>
        <fullName evidence="1">UDP-MurNAc-tripeptide synthetase</fullName>
    </alternativeName>
    <alternativeName>
        <fullName evidence="1">UDP-N-acetylmuramyl-tripeptide synthetase</fullName>
    </alternativeName>
</protein>